<feature type="chain" id="PRO_0000350519" description="Dual-specificity RNA methyltransferase RlmN">
    <location>
        <begin position="1"/>
        <end position="375"/>
    </location>
</feature>
<feature type="domain" description="Radical SAM core" evidence="2">
    <location>
        <begin position="100"/>
        <end position="339"/>
    </location>
</feature>
<feature type="active site" description="Proton acceptor" evidence="1">
    <location>
        <position position="94"/>
    </location>
</feature>
<feature type="active site" description="S-methylcysteine intermediate" evidence="1">
    <location>
        <position position="344"/>
    </location>
</feature>
<feature type="binding site" evidence="1">
    <location>
        <position position="114"/>
    </location>
    <ligand>
        <name>[4Fe-4S] cluster</name>
        <dbReference type="ChEBI" id="CHEBI:49883"/>
        <note>4Fe-4S-S-AdoMet</note>
    </ligand>
</feature>
<feature type="binding site" evidence="1">
    <location>
        <position position="118"/>
    </location>
    <ligand>
        <name>[4Fe-4S] cluster</name>
        <dbReference type="ChEBI" id="CHEBI:49883"/>
        <note>4Fe-4S-S-AdoMet</note>
    </ligand>
</feature>
<feature type="binding site" evidence="1">
    <location>
        <position position="121"/>
    </location>
    <ligand>
        <name>[4Fe-4S] cluster</name>
        <dbReference type="ChEBI" id="CHEBI:49883"/>
        <note>4Fe-4S-S-AdoMet</note>
    </ligand>
</feature>
<feature type="binding site" evidence="1">
    <location>
        <begin position="168"/>
        <end position="169"/>
    </location>
    <ligand>
        <name>S-adenosyl-L-methionine</name>
        <dbReference type="ChEBI" id="CHEBI:59789"/>
    </ligand>
</feature>
<feature type="binding site" evidence="1">
    <location>
        <position position="200"/>
    </location>
    <ligand>
        <name>S-adenosyl-L-methionine</name>
        <dbReference type="ChEBI" id="CHEBI:59789"/>
    </ligand>
</feature>
<feature type="binding site" evidence="1">
    <location>
        <begin position="222"/>
        <end position="224"/>
    </location>
    <ligand>
        <name>S-adenosyl-L-methionine</name>
        <dbReference type="ChEBI" id="CHEBI:59789"/>
    </ligand>
</feature>
<feature type="binding site" evidence="1">
    <location>
        <position position="301"/>
    </location>
    <ligand>
        <name>S-adenosyl-L-methionine</name>
        <dbReference type="ChEBI" id="CHEBI:59789"/>
    </ligand>
</feature>
<feature type="disulfide bond" description="(transient)" evidence="1">
    <location>
        <begin position="107"/>
        <end position="344"/>
    </location>
</feature>
<proteinExistence type="inferred from homology"/>
<protein>
    <recommendedName>
        <fullName evidence="1">Dual-specificity RNA methyltransferase RlmN</fullName>
        <ecNumber evidence="1">2.1.1.192</ecNumber>
    </recommendedName>
    <alternativeName>
        <fullName evidence="1">23S rRNA (adenine(2503)-C(2))-methyltransferase</fullName>
    </alternativeName>
    <alternativeName>
        <fullName evidence="1">23S rRNA m2A2503 methyltransferase</fullName>
    </alternativeName>
    <alternativeName>
        <fullName evidence="1">Ribosomal RNA large subunit methyltransferase N</fullName>
    </alternativeName>
    <alternativeName>
        <fullName evidence="1">tRNA (adenine(37)-C(2))-methyltransferase</fullName>
    </alternativeName>
    <alternativeName>
        <fullName evidence="1">tRNA m2A37 methyltransferase</fullName>
    </alternativeName>
</protein>
<evidence type="ECO:0000255" key="1">
    <source>
        <dbReference type="HAMAP-Rule" id="MF_01849"/>
    </source>
</evidence>
<evidence type="ECO:0000255" key="2">
    <source>
        <dbReference type="PROSITE-ProRule" id="PRU01266"/>
    </source>
</evidence>
<comment type="function">
    <text evidence="1">Specifically methylates position 2 of adenine 2503 in 23S rRNA and position 2 of adenine 37 in tRNAs. m2A2503 modification seems to play a crucial role in the proofreading step occurring at the peptidyl transferase center and thus would serve to optimize ribosomal fidelity.</text>
</comment>
<comment type="catalytic activity">
    <reaction evidence="1">
        <text>adenosine(2503) in 23S rRNA + 2 reduced [2Fe-2S]-[ferredoxin] + 2 S-adenosyl-L-methionine = 2-methyladenosine(2503) in 23S rRNA + 5'-deoxyadenosine + L-methionine + 2 oxidized [2Fe-2S]-[ferredoxin] + S-adenosyl-L-homocysteine</text>
        <dbReference type="Rhea" id="RHEA:42916"/>
        <dbReference type="Rhea" id="RHEA-COMP:10000"/>
        <dbReference type="Rhea" id="RHEA-COMP:10001"/>
        <dbReference type="Rhea" id="RHEA-COMP:10152"/>
        <dbReference type="Rhea" id="RHEA-COMP:10282"/>
        <dbReference type="ChEBI" id="CHEBI:17319"/>
        <dbReference type="ChEBI" id="CHEBI:33737"/>
        <dbReference type="ChEBI" id="CHEBI:33738"/>
        <dbReference type="ChEBI" id="CHEBI:57844"/>
        <dbReference type="ChEBI" id="CHEBI:57856"/>
        <dbReference type="ChEBI" id="CHEBI:59789"/>
        <dbReference type="ChEBI" id="CHEBI:74411"/>
        <dbReference type="ChEBI" id="CHEBI:74497"/>
        <dbReference type="EC" id="2.1.1.192"/>
    </reaction>
</comment>
<comment type="catalytic activity">
    <reaction evidence="1">
        <text>adenosine(37) in tRNA + 2 reduced [2Fe-2S]-[ferredoxin] + 2 S-adenosyl-L-methionine = 2-methyladenosine(37) in tRNA + 5'-deoxyadenosine + L-methionine + 2 oxidized [2Fe-2S]-[ferredoxin] + S-adenosyl-L-homocysteine</text>
        <dbReference type="Rhea" id="RHEA:43332"/>
        <dbReference type="Rhea" id="RHEA-COMP:10000"/>
        <dbReference type="Rhea" id="RHEA-COMP:10001"/>
        <dbReference type="Rhea" id="RHEA-COMP:10162"/>
        <dbReference type="Rhea" id="RHEA-COMP:10485"/>
        <dbReference type="ChEBI" id="CHEBI:17319"/>
        <dbReference type="ChEBI" id="CHEBI:33737"/>
        <dbReference type="ChEBI" id="CHEBI:33738"/>
        <dbReference type="ChEBI" id="CHEBI:57844"/>
        <dbReference type="ChEBI" id="CHEBI:57856"/>
        <dbReference type="ChEBI" id="CHEBI:59789"/>
        <dbReference type="ChEBI" id="CHEBI:74411"/>
        <dbReference type="ChEBI" id="CHEBI:74497"/>
        <dbReference type="EC" id="2.1.1.192"/>
    </reaction>
</comment>
<comment type="cofactor">
    <cofactor evidence="1">
        <name>[4Fe-4S] cluster</name>
        <dbReference type="ChEBI" id="CHEBI:49883"/>
    </cofactor>
    <text evidence="1">Binds 1 [4Fe-4S] cluster. The cluster is coordinated with 3 cysteines and an exchangeable S-adenosyl-L-methionine.</text>
</comment>
<comment type="subcellular location">
    <subcellularLocation>
        <location evidence="1">Cytoplasm</location>
    </subcellularLocation>
</comment>
<comment type="miscellaneous">
    <text evidence="1">Reaction proceeds by a ping-pong mechanism involving intermediate methylation of a conserved cysteine residue.</text>
</comment>
<comment type="similarity">
    <text evidence="1">Belongs to the radical SAM superfamily. RlmN family.</text>
</comment>
<name>RLMN_VIBPA</name>
<accession>Q87S19</accession>
<dbReference type="EC" id="2.1.1.192" evidence="1"/>
<dbReference type="EMBL" id="BA000031">
    <property type="protein sequence ID" value="BAC58868.1"/>
    <property type="molecule type" value="Genomic_DNA"/>
</dbReference>
<dbReference type="RefSeq" id="NP_796984.1">
    <property type="nucleotide sequence ID" value="NC_004603.1"/>
</dbReference>
<dbReference type="RefSeq" id="WP_005460214.1">
    <property type="nucleotide sequence ID" value="NC_004603.1"/>
</dbReference>
<dbReference type="SMR" id="Q87S19"/>
<dbReference type="GeneID" id="1188080"/>
<dbReference type="KEGG" id="vpa:VP0605"/>
<dbReference type="PATRIC" id="fig|223926.6.peg.574"/>
<dbReference type="eggNOG" id="COG0820">
    <property type="taxonomic scope" value="Bacteria"/>
</dbReference>
<dbReference type="HOGENOM" id="CLU_029101_0_0_6"/>
<dbReference type="Proteomes" id="UP000002493">
    <property type="component" value="Chromosome 1"/>
</dbReference>
<dbReference type="GO" id="GO:0005737">
    <property type="term" value="C:cytoplasm"/>
    <property type="evidence" value="ECO:0007669"/>
    <property type="project" value="UniProtKB-SubCell"/>
</dbReference>
<dbReference type="GO" id="GO:0051539">
    <property type="term" value="F:4 iron, 4 sulfur cluster binding"/>
    <property type="evidence" value="ECO:0007669"/>
    <property type="project" value="UniProtKB-UniRule"/>
</dbReference>
<dbReference type="GO" id="GO:0046872">
    <property type="term" value="F:metal ion binding"/>
    <property type="evidence" value="ECO:0007669"/>
    <property type="project" value="UniProtKB-KW"/>
</dbReference>
<dbReference type="GO" id="GO:0070040">
    <property type="term" value="F:rRNA (adenine(2503)-C2-)-methyltransferase activity"/>
    <property type="evidence" value="ECO:0007669"/>
    <property type="project" value="UniProtKB-UniRule"/>
</dbReference>
<dbReference type="GO" id="GO:0019843">
    <property type="term" value="F:rRNA binding"/>
    <property type="evidence" value="ECO:0007669"/>
    <property type="project" value="UniProtKB-UniRule"/>
</dbReference>
<dbReference type="GO" id="GO:0002935">
    <property type="term" value="F:tRNA (adenine(37)-C2)-methyltransferase activity"/>
    <property type="evidence" value="ECO:0007669"/>
    <property type="project" value="UniProtKB-UniRule"/>
</dbReference>
<dbReference type="GO" id="GO:0000049">
    <property type="term" value="F:tRNA binding"/>
    <property type="evidence" value="ECO:0007669"/>
    <property type="project" value="UniProtKB-UniRule"/>
</dbReference>
<dbReference type="GO" id="GO:0070475">
    <property type="term" value="P:rRNA base methylation"/>
    <property type="evidence" value="ECO:0007669"/>
    <property type="project" value="UniProtKB-UniRule"/>
</dbReference>
<dbReference type="GO" id="GO:0030488">
    <property type="term" value="P:tRNA methylation"/>
    <property type="evidence" value="ECO:0007669"/>
    <property type="project" value="UniProtKB-UniRule"/>
</dbReference>
<dbReference type="CDD" id="cd01335">
    <property type="entry name" value="Radical_SAM"/>
    <property type="match status" value="1"/>
</dbReference>
<dbReference type="FunFam" id="1.10.150.530:FF:000003">
    <property type="entry name" value="Dual-specificity RNA methyltransferase RlmN"/>
    <property type="match status" value="1"/>
</dbReference>
<dbReference type="FunFam" id="3.20.20.70:FF:000008">
    <property type="entry name" value="Dual-specificity RNA methyltransferase RlmN"/>
    <property type="match status" value="1"/>
</dbReference>
<dbReference type="Gene3D" id="1.10.150.530">
    <property type="match status" value="1"/>
</dbReference>
<dbReference type="Gene3D" id="3.20.20.70">
    <property type="entry name" value="Aldolase class I"/>
    <property type="match status" value="1"/>
</dbReference>
<dbReference type="HAMAP" id="MF_01849">
    <property type="entry name" value="RNA_methyltr_RlmN"/>
    <property type="match status" value="1"/>
</dbReference>
<dbReference type="InterPro" id="IPR013785">
    <property type="entry name" value="Aldolase_TIM"/>
</dbReference>
<dbReference type="InterPro" id="IPR040072">
    <property type="entry name" value="Methyltransferase_A"/>
</dbReference>
<dbReference type="InterPro" id="IPR048641">
    <property type="entry name" value="RlmN_N"/>
</dbReference>
<dbReference type="InterPro" id="IPR027492">
    <property type="entry name" value="RNA_MTrfase_RlmN"/>
</dbReference>
<dbReference type="InterPro" id="IPR004383">
    <property type="entry name" value="rRNA_lsu_MTrfase_RlmN/Cfr"/>
</dbReference>
<dbReference type="InterPro" id="IPR007197">
    <property type="entry name" value="rSAM"/>
</dbReference>
<dbReference type="NCBIfam" id="NF008396">
    <property type="entry name" value="PRK11194.1"/>
    <property type="match status" value="1"/>
</dbReference>
<dbReference type="NCBIfam" id="TIGR00048">
    <property type="entry name" value="rRNA_mod_RlmN"/>
    <property type="match status" value="1"/>
</dbReference>
<dbReference type="PANTHER" id="PTHR30544">
    <property type="entry name" value="23S RRNA METHYLTRANSFERASE"/>
    <property type="match status" value="1"/>
</dbReference>
<dbReference type="PANTHER" id="PTHR30544:SF5">
    <property type="entry name" value="RADICAL SAM CORE DOMAIN-CONTAINING PROTEIN"/>
    <property type="match status" value="1"/>
</dbReference>
<dbReference type="Pfam" id="PF04055">
    <property type="entry name" value="Radical_SAM"/>
    <property type="match status" value="1"/>
</dbReference>
<dbReference type="Pfam" id="PF21016">
    <property type="entry name" value="RlmN_N"/>
    <property type="match status" value="1"/>
</dbReference>
<dbReference type="PIRSF" id="PIRSF006004">
    <property type="entry name" value="CHP00048"/>
    <property type="match status" value="1"/>
</dbReference>
<dbReference type="SFLD" id="SFLDF00275">
    <property type="entry name" value="adenosine_C2_methyltransferase"/>
    <property type="match status" value="1"/>
</dbReference>
<dbReference type="SFLD" id="SFLDG01062">
    <property type="entry name" value="methyltransferase_(Class_A)"/>
    <property type="match status" value="1"/>
</dbReference>
<dbReference type="SUPFAM" id="SSF102114">
    <property type="entry name" value="Radical SAM enzymes"/>
    <property type="match status" value="1"/>
</dbReference>
<dbReference type="PROSITE" id="PS51918">
    <property type="entry name" value="RADICAL_SAM"/>
    <property type="match status" value="1"/>
</dbReference>
<reference key="1">
    <citation type="journal article" date="2003" name="Lancet">
        <title>Genome sequence of Vibrio parahaemolyticus: a pathogenic mechanism distinct from that of V. cholerae.</title>
        <authorList>
            <person name="Makino K."/>
            <person name="Oshima K."/>
            <person name="Kurokawa K."/>
            <person name="Yokoyama K."/>
            <person name="Uda T."/>
            <person name="Tagomori K."/>
            <person name="Iijima Y."/>
            <person name="Najima M."/>
            <person name="Nakano M."/>
            <person name="Yamashita A."/>
            <person name="Kubota Y."/>
            <person name="Kimura S."/>
            <person name="Yasunaga T."/>
            <person name="Honda T."/>
            <person name="Shinagawa H."/>
            <person name="Hattori M."/>
            <person name="Iida T."/>
        </authorList>
    </citation>
    <scope>NUCLEOTIDE SEQUENCE [LARGE SCALE GENOMIC DNA]</scope>
    <source>
        <strain>RIMD 2210633</strain>
    </source>
</reference>
<gene>
    <name evidence="1" type="primary">rlmN</name>
    <name type="ordered locus">VP0605</name>
</gene>
<keyword id="KW-0004">4Fe-4S</keyword>
<keyword id="KW-0963">Cytoplasm</keyword>
<keyword id="KW-1015">Disulfide bond</keyword>
<keyword id="KW-0408">Iron</keyword>
<keyword id="KW-0411">Iron-sulfur</keyword>
<keyword id="KW-0479">Metal-binding</keyword>
<keyword id="KW-0489">Methyltransferase</keyword>
<keyword id="KW-0698">rRNA processing</keyword>
<keyword id="KW-0949">S-adenosyl-L-methionine</keyword>
<keyword id="KW-0808">Transferase</keyword>
<keyword id="KW-0819">tRNA processing</keyword>
<organism>
    <name type="scientific">Vibrio parahaemolyticus serotype O3:K6 (strain RIMD 2210633)</name>
    <dbReference type="NCBI Taxonomy" id="223926"/>
    <lineage>
        <taxon>Bacteria</taxon>
        <taxon>Pseudomonadati</taxon>
        <taxon>Pseudomonadota</taxon>
        <taxon>Gammaproteobacteria</taxon>
        <taxon>Vibrionales</taxon>
        <taxon>Vibrionaceae</taxon>
        <taxon>Vibrio</taxon>
    </lineage>
</organism>
<sequence>MTTEKINLLDFDRKGMRQFFAEELGEKAFRADQVMKWIYHFGVDDFDNMTNINKKLREKLQHKCEIKAPTVAEAQHSSDGTIKWAMKVGDQDVETVYIPEEDRATLCVSSQVGCALECKFCSTAQQGFNRNLKVSEIIGQVWRAAREIGLQKETGRRPITNVVMMGMGEPLLNMKNLIPALEIMLDDLGFGLSKRRVTVSTSGVVSGLDQMTGKIDVALAISLHAPNDKLRSEIMPINDRWDIQDFLASVRRYIASSNANRGKVTVEYVLLDHVNDDMGHARELAELMKDTPCKINLIPFNPYPGSPYKKPSNSRIDRFQKTLMQYEHTVTVRKTRGDDIDAACGQLVGDVIDRTKRTAALKAARGAETIDVKAV</sequence>